<dbReference type="EC" id="5.4.99.25" evidence="1"/>
<dbReference type="EMBL" id="CP000090">
    <property type="protein sequence ID" value="AAZ61390.1"/>
    <property type="molecule type" value="Genomic_DNA"/>
</dbReference>
<dbReference type="SMR" id="Q46ZP3"/>
<dbReference type="STRING" id="264198.Reut_A2026"/>
<dbReference type="KEGG" id="reu:Reut_A2026"/>
<dbReference type="eggNOG" id="COG0130">
    <property type="taxonomic scope" value="Bacteria"/>
</dbReference>
<dbReference type="HOGENOM" id="CLU_032087_0_3_4"/>
<dbReference type="OrthoDB" id="9802309at2"/>
<dbReference type="GO" id="GO:0003723">
    <property type="term" value="F:RNA binding"/>
    <property type="evidence" value="ECO:0007669"/>
    <property type="project" value="InterPro"/>
</dbReference>
<dbReference type="GO" id="GO:0160148">
    <property type="term" value="F:tRNA pseudouridine(55) synthase activity"/>
    <property type="evidence" value="ECO:0007669"/>
    <property type="project" value="UniProtKB-EC"/>
</dbReference>
<dbReference type="GO" id="GO:1990481">
    <property type="term" value="P:mRNA pseudouridine synthesis"/>
    <property type="evidence" value="ECO:0007669"/>
    <property type="project" value="TreeGrafter"/>
</dbReference>
<dbReference type="GO" id="GO:0031119">
    <property type="term" value="P:tRNA pseudouridine synthesis"/>
    <property type="evidence" value="ECO:0007669"/>
    <property type="project" value="UniProtKB-UniRule"/>
</dbReference>
<dbReference type="CDD" id="cd02573">
    <property type="entry name" value="PseudoU_synth_EcTruB"/>
    <property type="match status" value="1"/>
</dbReference>
<dbReference type="CDD" id="cd21152">
    <property type="entry name" value="PUA_TruB_bacterial"/>
    <property type="match status" value="1"/>
</dbReference>
<dbReference type="FunFam" id="3.30.2350.10:FF:000011">
    <property type="entry name" value="tRNA pseudouridine synthase B"/>
    <property type="match status" value="1"/>
</dbReference>
<dbReference type="Gene3D" id="3.30.2350.10">
    <property type="entry name" value="Pseudouridine synthase"/>
    <property type="match status" value="1"/>
</dbReference>
<dbReference type="Gene3D" id="2.30.130.10">
    <property type="entry name" value="PUA domain"/>
    <property type="match status" value="1"/>
</dbReference>
<dbReference type="HAMAP" id="MF_01080">
    <property type="entry name" value="TruB_bact"/>
    <property type="match status" value="1"/>
</dbReference>
<dbReference type="InterPro" id="IPR020103">
    <property type="entry name" value="PsdUridine_synth_cat_dom_sf"/>
</dbReference>
<dbReference type="InterPro" id="IPR002501">
    <property type="entry name" value="PsdUridine_synth_N"/>
</dbReference>
<dbReference type="InterPro" id="IPR015947">
    <property type="entry name" value="PUA-like_sf"/>
</dbReference>
<dbReference type="InterPro" id="IPR036974">
    <property type="entry name" value="PUA_sf"/>
</dbReference>
<dbReference type="InterPro" id="IPR014780">
    <property type="entry name" value="tRNA_psdUridine_synth_TruB"/>
</dbReference>
<dbReference type="InterPro" id="IPR015240">
    <property type="entry name" value="tRNA_sdUridine_synth_fam1_C"/>
</dbReference>
<dbReference type="InterPro" id="IPR032819">
    <property type="entry name" value="TruB_C"/>
</dbReference>
<dbReference type="NCBIfam" id="TIGR00431">
    <property type="entry name" value="TruB"/>
    <property type="match status" value="1"/>
</dbReference>
<dbReference type="PANTHER" id="PTHR13767:SF2">
    <property type="entry name" value="PSEUDOURIDYLATE SYNTHASE TRUB1"/>
    <property type="match status" value="1"/>
</dbReference>
<dbReference type="PANTHER" id="PTHR13767">
    <property type="entry name" value="TRNA-PSEUDOURIDINE SYNTHASE"/>
    <property type="match status" value="1"/>
</dbReference>
<dbReference type="Pfam" id="PF09157">
    <property type="entry name" value="TruB-C_2"/>
    <property type="match status" value="1"/>
</dbReference>
<dbReference type="Pfam" id="PF16198">
    <property type="entry name" value="TruB_C_2"/>
    <property type="match status" value="1"/>
</dbReference>
<dbReference type="Pfam" id="PF01509">
    <property type="entry name" value="TruB_N"/>
    <property type="match status" value="1"/>
</dbReference>
<dbReference type="SUPFAM" id="SSF55120">
    <property type="entry name" value="Pseudouridine synthase"/>
    <property type="match status" value="1"/>
</dbReference>
<dbReference type="SUPFAM" id="SSF88697">
    <property type="entry name" value="PUA domain-like"/>
    <property type="match status" value="1"/>
</dbReference>
<evidence type="ECO:0000255" key="1">
    <source>
        <dbReference type="HAMAP-Rule" id="MF_01080"/>
    </source>
</evidence>
<name>TRUB_CUPPJ</name>
<protein>
    <recommendedName>
        <fullName evidence="1">tRNA pseudouridine synthase B</fullName>
        <ecNumber evidence="1">5.4.99.25</ecNumber>
    </recommendedName>
    <alternativeName>
        <fullName evidence="1">tRNA pseudouridine(55) synthase</fullName>
        <shortName evidence="1">Psi55 synthase</shortName>
    </alternativeName>
    <alternativeName>
        <fullName evidence="1">tRNA pseudouridylate synthase</fullName>
    </alternativeName>
    <alternativeName>
        <fullName evidence="1">tRNA-uridine isomerase</fullName>
    </alternativeName>
</protein>
<organism>
    <name type="scientific">Cupriavidus pinatubonensis (strain JMP 134 / LMG 1197)</name>
    <name type="common">Cupriavidus necator (strain JMP 134)</name>
    <dbReference type="NCBI Taxonomy" id="264198"/>
    <lineage>
        <taxon>Bacteria</taxon>
        <taxon>Pseudomonadati</taxon>
        <taxon>Pseudomonadota</taxon>
        <taxon>Betaproteobacteria</taxon>
        <taxon>Burkholderiales</taxon>
        <taxon>Burkholderiaceae</taxon>
        <taxon>Cupriavidus</taxon>
    </lineage>
</organism>
<reference key="1">
    <citation type="journal article" date="2010" name="PLoS ONE">
        <title>The complete multipartite genome sequence of Cupriavidus necator JMP134, a versatile pollutant degrader.</title>
        <authorList>
            <person name="Lykidis A."/>
            <person name="Perez-Pantoja D."/>
            <person name="Ledger T."/>
            <person name="Mavromatis K."/>
            <person name="Anderson I.J."/>
            <person name="Ivanova N.N."/>
            <person name="Hooper S.D."/>
            <person name="Lapidus A."/>
            <person name="Lucas S."/>
            <person name="Gonzalez B."/>
            <person name="Kyrpides N.C."/>
        </authorList>
    </citation>
    <scope>NUCLEOTIDE SEQUENCE [LARGE SCALE GENOMIC DNA]</scope>
    <source>
        <strain>JMP134 / LMG 1197</strain>
    </source>
</reference>
<comment type="function">
    <text evidence="1">Responsible for synthesis of pseudouridine from uracil-55 in the psi GC loop of transfer RNAs.</text>
</comment>
<comment type="catalytic activity">
    <reaction evidence="1">
        <text>uridine(55) in tRNA = pseudouridine(55) in tRNA</text>
        <dbReference type="Rhea" id="RHEA:42532"/>
        <dbReference type="Rhea" id="RHEA-COMP:10101"/>
        <dbReference type="Rhea" id="RHEA-COMP:10102"/>
        <dbReference type="ChEBI" id="CHEBI:65314"/>
        <dbReference type="ChEBI" id="CHEBI:65315"/>
        <dbReference type="EC" id="5.4.99.25"/>
    </reaction>
</comment>
<comment type="similarity">
    <text evidence="1">Belongs to the pseudouridine synthase TruB family. Type 1 subfamily.</text>
</comment>
<proteinExistence type="inferred from homology"/>
<feature type="chain" id="PRO_0000229376" description="tRNA pseudouridine synthase B">
    <location>
        <begin position="1"/>
        <end position="315"/>
    </location>
</feature>
<feature type="active site" description="Nucleophile" evidence="1">
    <location>
        <position position="54"/>
    </location>
</feature>
<gene>
    <name evidence="1" type="primary">truB</name>
    <name type="ordered locus">Reut_A2026</name>
</gene>
<accession>Q46ZP3</accession>
<keyword id="KW-0413">Isomerase</keyword>
<keyword id="KW-0819">tRNA processing</keyword>
<sequence length="315" mass="34033">MTDSANNRPPRLPRREVHGVLLLDKPLGLSSNDALVRAKRLLRALKAGHTGTLDPLATGLLPLCFGEATKFSQDLLDADKTYEAVVRLGQKTTTGDAEGEVVVERPVSCDRAGLDAAIARFLGEIDQVPPMHSALKKDGRPLYEYARAGQTVERPARRVTIHAIDVLDCALPLAPSFTMRVKCSKGTYIRTLAEDIGEALGCGAHLTGLRRIAVGDLTLDGAVTLDQIDAQADEARPAMLAPVDALLRRCPPVTLSAEAMSRFLQGQRLAYRDLDPDSAPQEGVLARVYGGEPPKLLGVARMREGALRPERLVRL</sequence>